<feature type="initiator methionine" description="Removed" evidence="4">
    <location>
        <position position="1"/>
    </location>
</feature>
<feature type="chain" id="PRO_0000357030" description="KH domain-containing protein At2g38610">
    <location>
        <begin position="2"/>
        <end position="286"/>
    </location>
</feature>
<feature type="domain" description="KH">
    <location>
        <begin position="141"/>
        <end position="208"/>
    </location>
</feature>
<feature type="region of interest" description="Disordered" evidence="1">
    <location>
        <begin position="256"/>
        <end position="286"/>
    </location>
</feature>
<feature type="modified residue" description="N-acetylserine" evidence="4">
    <location>
        <position position="2"/>
    </location>
</feature>
<feature type="modified residue" description="Phosphoserine" evidence="3">
    <location>
        <position position="263"/>
    </location>
</feature>
<feature type="modified residue" description="Phosphoserine" evidence="3">
    <location>
        <position position="273"/>
    </location>
</feature>
<protein>
    <recommendedName>
        <fullName>KH domain-containing protein At2g38610</fullName>
    </recommendedName>
    <alternativeName>
        <fullName>Quaking-like protein 3</fullName>
    </alternativeName>
</protein>
<dbReference type="EMBL" id="AC005499">
    <property type="protein sequence ID" value="AAC67357.1"/>
    <property type="molecule type" value="Genomic_DNA"/>
</dbReference>
<dbReference type="EMBL" id="CP002685">
    <property type="protein sequence ID" value="AEC09555.1"/>
    <property type="molecule type" value="Genomic_DNA"/>
</dbReference>
<dbReference type="EMBL" id="CP002685">
    <property type="protein sequence ID" value="AEC09556.1"/>
    <property type="molecule type" value="Genomic_DNA"/>
</dbReference>
<dbReference type="EMBL" id="AY042804">
    <property type="protein sequence ID" value="AAK68744.1"/>
    <property type="molecule type" value="mRNA"/>
</dbReference>
<dbReference type="EMBL" id="AY064682">
    <property type="protein sequence ID" value="AAL47387.1"/>
    <property type="molecule type" value="mRNA"/>
</dbReference>
<dbReference type="EMBL" id="AY065112">
    <property type="protein sequence ID" value="AAL38288.1"/>
    <property type="molecule type" value="mRNA"/>
</dbReference>
<dbReference type="EMBL" id="BT000084">
    <property type="protein sequence ID" value="AAN15403.1"/>
    <property type="molecule type" value="mRNA"/>
</dbReference>
<dbReference type="PIR" id="B84807">
    <property type="entry name" value="B84807"/>
</dbReference>
<dbReference type="RefSeq" id="NP_181395.1">
    <property type="nucleotide sequence ID" value="NM_129418.3"/>
</dbReference>
<dbReference type="RefSeq" id="NP_850296.1">
    <property type="nucleotide sequence ID" value="NM_179965.4"/>
</dbReference>
<dbReference type="SMR" id="Q9ZVI3"/>
<dbReference type="BioGRID" id="3785">
    <property type="interactions" value="4"/>
</dbReference>
<dbReference type="FunCoup" id="Q9ZVI3">
    <property type="interactions" value="1354"/>
</dbReference>
<dbReference type="IntAct" id="Q9ZVI3">
    <property type="interactions" value="4"/>
</dbReference>
<dbReference type="STRING" id="3702.Q9ZVI3"/>
<dbReference type="GlyGen" id="Q9ZVI3">
    <property type="glycosylation" value="3 sites, 1 O-linked glycan (3 sites)"/>
</dbReference>
<dbReference type="iPTMnet" id="Q9ZVI3"/>
<dbReference type="PaxDb" id="3702-AT2G38610.1"/>
<dbReference type="ProteomicsDB" id="225935"/>
<dbReference type="EnsemblPlants" id="AT2G38610.1">
    <property type="protein sequence ID" value="AT2G38610.1"/>
    <property type="gene ID" value="AT2G38610"/>
</dbReference>
<dbReference type="EnsemblPlants" id="AT2G38610.2">
    <property type="protein sequence ID" value="AT2G38610.2"/>
    <property type="gene ID" value="AT2G38610"/>
</dbReference>
<dbReference type="GeneID" id="818443"/>
<dbReference type="Gramene" id="AT2G38610.1">
    <property type="protein sequence ID" value="AT2G38610.1"/>
    <property type="gene ID" value="AT2G38610"/>
</dbReference>
<dbReference type="Gramene" id="AT2G38610.2">
    <property type="protein sequence ID" value="AT2G38610.2"/>
    <property type="gene ID" value="AT2G38610"/>
</dbReference>
<dbReference type="KEGG" id="ath:AT2G38610"/>
<dbReference type="Araport" id="AT2G38610"/>
<dbReference type="TAIR" id="AT2G38610"/>
<dbReference type="eggNOG" id="KOG1588">
    <property type="taxonomic scope" value="Eukaryota"/>
</dbReference>
<dbReference type="HOGENOM" id="CLU_065679_0_1_1"/>
<dbReference type="InParanoid" id="Q9ZVI3"/>
<dbReference type="OMA" id="PMASTNI"/>
<dbReference type="OrthoDB" id="6777263at2759"/>
<dbReference type="PhylomeDB" id="Q9ZVI3"/>
<dbReference type="PRO" id="PR:Q9ZVI3"/>
<dbReference type="Proteomes" id="UP000006548">
    <property type="component" value="Chromosome 2"/>
</dbReference>
<dbReference type="ExpressionAtlas" id="Q9ZVI3">
    <property type="expression patterns" value="baseline and differential"/>
</dbReference>
<dbReference type="GO" id="GO:0005634">
    <property type="term" value="C:nucleus"/>
    <property type="evidence" value="ECO:0007669"/>
    <property type="project" value="UniProtKB-SubCell"/>
</dbReference>
<dbReference type="GO" id="GO:0003729">
    <property type="term" value="F:mRNA binding"/>
    <property type="evidence" value="ECO:0000314"/>
    <property type="project" value="TAIR"/>
</dbReference>
<dbReference type="Gene3D" id="3.30.1370.10">
    <property type="entry name" value="K Homology domain, type 1"/>
    <property type="match status" value="1"/>
</dbReference>
<dbReference type="InterPro" id="IPR045071">
    <property type="entry name" value="BBP-like"/>
</dbReference>
<dbReference type="InterPro" id="IPR055256">
    <property type="entry name" value="KH_1_KHDC4/BBP-like"/>
</dbReference>
<dbReference type="InterPro" id="IPR004087">
    <property type="entry name" value="KH_dom"/>
</dbReference>
<dbReference type="InterPro" id="IPR036612">
    <property type="entry name" value="KH_dom_type_1_sf"/>
</dbReference>
<dbReference type="InterPro" id="IPR032377">
    <property type="entry name" value="STAR_dimer"/>
</dbReference>
<dbReference type="PANTHER" id="PTHR11208:SF153">
    <property type="entry name" value="K HOMOLOGY DOMAIN-CONTAINING PROTEIN"/>
    <property type="match status" value="1"/>
</dbReference>
<dbReference type="PANTHER" id="PTHR11208">
    <property type="entry name" value="RNA-BINDING PROTEIN RELATED"/>
    <property type="match status" value="1"/>
</dbReference>
<dbReference type="Pfam" id="PF22675">
    <property type="entry name" value="KH-I_KHDC4-BBP"/>
    <property type="match status" value="1"/>
</dbReference>
<dbReference type="Pfam" id="PF16544">
    <property type="entry name" value="STAR_dimer"/>
    <property type="match status" value="1"/>
</dbReference>
<dbReference type="SMART" id="SM00322">
    <property type="entry name" value="KH"/>
    <property type="match status" value="1"/>
</dbReference>
<dbReference type="SUPFAM" id="SSF54791">
    <property type="entry name" value="Eukaryotic type KH-domain (KH-domain type I)"/>
    <property type="match status" value="1"/>
</dbReference>
<sequence>MSGLYNNSSYFSPARAASPQIRSTPEIDSSQYLTELLAEHQKLTPFMQVLPICSRLLNQEMFRVSGMMSNQGFGDFDRLRHRSPSPMASSNLMSNVSNTGLGGWNGLSQERLSGTPGMTMDWQGAPGSPSSYTVKRILRLEIPVDNYPNFNFVGRLLGPRGNSLKRVEATTGCRVFIRGKGSIKDPEKEDKLRGRPGYEHLNEQLHILIEADLPASIVEIRLRQAQEIIEELLKPVDESQDFIKRQQLRELALLNSNNLREESPGPSGGGSVSPFNSSGKRPKTGC</sequence>
<reference key="1">
    <citation type="journal article" date="1999" name="Nature">
        <title>Sequence and analysis of chromosome 2 of the plant Arabidopsis thaliana.</title>
        <authorList>
            <person name="Lin X."/>
            <person name="Kaul S."/>
            <person name="Rounsley S.D."/>
            <person name="Shea T.P."/>
            <person name="Benito M.-I."/>
            <person name="Town C.D."/>
            <person name="Fujii C.Y."/>
            <person name="Mason T.M."/>
            <person name="Bowman C.L."/>
            <person name="Barnstead M.E."/>
            <person name="Feldblyum T.V."/>
            <person name="Buell C.R."/>
            <person name="Ketchum K.A."/>
            <person name="Lee J.J."/>
            <person name="Ronning C.M."/>
            <person name="Koo H.L."/>
            <person name="Moffat K.S."/>
            <person name="Cronin L.A."/>
            <person name="Shen M."/>
            <person name="Pai G."/>
            <person name="Van Aken S."/>
            <person name="Umayam L."/>
            <person name="Tallon L.J."/>
            <person name="Gill J.E."/>
            <person name="Adams M.D."/>
            <person name="Carrera A.J."/>
            <person name="Creasy T.H."/>
            <person name="Goodman H.M."/>
            <person name="Somerville C.R."/>
            <person name="Copenhaver G.P."/>
            <person name="Preuss D."/>
            <person name="Nierman W.C."/>
            <person name="White O."/>
            <person name="Eisen J.A."/>
            <person name="Salzberg S.L."/>
            <person name="Fraser C.M."/>
            <person name="Venter J.C."/>
        </authorList>
    </citation>
    <scope>NUCLEOTIDE SEQUENCE [LARGE SCALE GENOMIC DNA]</scope>
    <source>
        <strain>cv. Columbia</strain>
    </source>
</reference>
<reference key="2">
    <citation type="journal article" date="2017" name="Plant J.">
        <title>Araport11: a complete reannotation of the Arabidopsis thaliana reference genome.</title>
        <authorList>
            <person name="Cheng C.Y."/>
            <person name="Krishnakumar V."/>
            <person name="Chan A.P."/>
            <person name="Thibaud-Nissen F."/>
            <person name="Schobel S."/>
            <person name="Town C.D."/>
        </authorList>
    </citation>
    <scope>GENOME REANNOTATION</scope>
    <source>
        <strain>cv. Columbia</strain>
    </source>
</reference>
<reference key="3">
    <citation type="journal article" date="2003" name="Science">
        <title>Empirical analysis of transcriptional activity in the Arabidopsis genome.</title>
        <authorList>
            <person name="Yamada K."/>
            <person name="Lim J."/>
            <person name="Dale J.M."/>
            <person name="Chen H."/>
            <person name="Shinn P."/>
            <person name="Palm C.J."/>
            <person name="Southwick A.M."/>
            <person name="Wu H.C."/>
            <person name="Kim C.J."/>
            <person name="Nguyen M."/>
            <person name="Pham P.K."/>
            <person name="Cheuk R.F."/>
            <person name="Karlin-Newmann G."/>
            <person name="Liu S.X."/>
            <person name="Lam B."/>
            <person name="Sakano H."/>
            <person name="Wu T."/>
            <person name="Yu G."/>
            <person name="Miranda M."/>
            <person name="Quach H.L."/>
            <person name="Tripp M."/>
            <person name="Chang C.H."/>
            <person name="Lee J.M."/>
            <person name="Toriumi M.J."/>
            <person name="Chan M.M."/>
            <person name="Tang C.C."/>
            <person name="Onodera C.S."/>
            <person name="Deng J.M."/>
            <person name="Akiyama K."/>
            <person name="Ansari Y."/>
            <person name="Arakawa T."/>
            <person name="Banh J."/>
            <person name="Banno F."/>
            <person name="Bowser L."/>
            <person name="Brooks S.Y."/>
            <person name="Carninci P."/>
            <person name="Chao Q."/>
            <person name="Choy N."/>
            <person name="Enju A."/>
            <person name="Goldsmith A.D."/>
            <person name="Gurjal M."/>
            <person name="Hansen N.F."/>
            <person name="Hayashizaki Y."/>
            <person name="Johnson-Hopson C."/>
            <person name="Hsuan V.W."/>
            <person name="Iida K."/>
            <person name="Karnes M."/>
            <person name="Khan S."/>
            <person name="Koesema E."/>
            <person name="Ishida J."/>
            <person name="Jiang P.X."/>
            <person name="Jones T."/>
            <person name="Kawai J."/>
            <person name="Kamiya A."/>
            <person name="Meyers C."/>
            <person name="Nakajima M."/>
            <person name="Narusaka M."/>
            <person name="Seki M."/>
            <person name="Sakurai T."/>
            <person name="Satou M."/>
            <person name="Tamse R."/>
            <person name="Vaysberg M."/>
            <person name="Wallender E.K."/>
            <person name="Wong C."/>
            <person name="Yamamura Y."/>
            <person name="Yuan S."/>
            <person name="Shinozaki K."/>
            <person name="Davis R.W."/>
            <person name="Theologis A."/>
            <person name="Ecker J.R."/>
        </authorList>
    </citation>
    <scope>NUCLEOTIDE SEQUENCE [LARGE SCALE MRNA]</scope>
    <source>
        <strain>cv. Columbia</strain>
    </source>
</reference>
<reference key="4">
    <citation type="journal article" date="2002" name="Nucleic Acids Res.">
        <title>Genome analysis: RNA recognition motif (RRM) and K homology (KH) domain RNA-binding proteins from the flowering plant Arabidopsis thaliana.</title>
        <authorList>
            <person name="Lorkovic Z.J."/>
            <person name="Barta A."/>
        </authorList>
    </citation>
    <scope>GENE FAMILY</scope>
</reference>
<reference key="5">
    <citation type="journal article" date="2009" name="Plant Physiol.">
        <title>Large-scale Arabidopsis phosphoproteome profiling reveals novel chloroplast kinase substrates and phosphorylation networks.</title>
        <authorList>
            <person name="Reiland S."/>
            <person name="Messerli G."/>
            <person name="Baerenfaller K."/>
            <person name="Gerrits B."/>
            <person name="Endler A."/>
            <person name="Grossmann J."/>
            <person name="Gruissem W."/>
            <person name="Baginsky S."/>
        </authorList>
    </citation>
    <scope>PHOSPHORYLATION [LARGE SCALE ANALYSIS] AT SER-263 AND SER-273</scope>
    <scope>IDENTIFICATION BY MASS SPECTROMETRY [LARGE SCALE ANALYSIS]</scope>
</reference>
<reference key="6">
    <citation type="journal article" date="2012" name="Mol. Cell. Proteomics">
        <title>Comparative large-scale characterisation of plant vs. mammal proteins reveals similar and idiosyncratic N-alpha acetylation features.</title>
        <authorList>
            <person name="Bienvenut W.V."/>
            <person name="Sumpton D."/>
            <person name="Martinez A."/>
            <person name="Lilla S."/>
            <person name="Espagne C."/>
            <person name="Meinnel T."/>
            <person name="Giglione C."/>
        </authorList>
    </citation>
    <scope>ACETYLATION [LARGE SCALE ANALYSIS] AT SER-2</scope>
    <scope>CLEAVAGE OF INITIATOR METHIONINE [LARGE SCALE ANALYSIS]</scope>
    <scope>IDENTIFICATION BY MASS SPECTROMETRY [LARGE SCALE ANALYSIS]</scope>
</reference>
<gene>
    <name type="ordered locus">At2g38610</name>
    <name type="ORF">T6A23.19</name>
</gene>
<proteinExistence type="evidence at protein level"/>
<comment type="interaction">
    <interactant intactId="EBI-4440478">
        <id>Q9ZVI3</id>
    </interactant>
    <interactant intactId="EBI-346271">
        <id>Q9SHZ6</id>
        <label>UBA1A</label>
    </interactant>
    <organismsDiffer>false</organismsDiffer>
    <experiments>3</experiments>
</comment>
<comment type="subcellular location">
    <subcellularLocation>
        <location evidence="2">Nucleus</location>
    </subcellularLocation>
</comment>
<name>QKIL3_ARATH</name>
<accession>Q9ZVI3</accession>
<organism>
    <name type="scientific">Arabidopsis thaliana</name>
    <name type="common">Mouse-ear cress</name>
    <dbReference type="NCBI Taxonomy" id="3702"/>
    <lineage>
        <taxon>Eukaryota</taxon>
        <taxon>Viridiplantae</taxon>
        <taxon>Streptophyta</taxon>
        <taxon>Embryophyta</taxon>
        <taxon>Tracheophyta</taxon>
        <taxon>Spermatophyta</taxon>
        <taxon>Magnoliopsida</taxon>
        <taxon>eudicotyledons</taxon>
        <taxon>Gunneridae</taxon>
        <taxon>Pentapetalae</taxon>
        <taxon>rosids</taxon>
        <taxon>malvids</taxon>
        <taxon>Brassicales</taxon>
        <taxon>Brassicaceae</taxon>
        <taxon>Camelineae</taxon>
        <taxon>Arabidopsis</taxon>
    </lineage>
</organism>
<evidence type="ECO:0000256" key="1">
    <source>
        <dbReference type="SAM" id="MobiDB-lite"/>
    </source>
</evidence>
<evidence type="ECO:0000305" key="2"/>
<evidence type="ECO:0007744" key="3">
    <source>
    </source>
</evidence>
<evidence type="ECO:0007744" key="4">
    <source>
    </source>
</evidence>
<keyword id="KW-0007">Acetylation</keyword>
<keyword id="KW-0539">Nucleus</keyword>
<keyword id="KW-0597">Phosphoprotein</keyword>
<keyword id="KW-1185">Reference proteome</keyword>
<keyword id="KW-0694">RNA-binding</keyword>